<name>YGR1_SCHPO</name>
<sequence length="355" mass="41015">MADIPADRKKIVQEGWSRLFSDIEQPSYIQKFPSQESLYVSFFEQCAFDDFDLTLLRFLKARKFVVTDSSDMLANAIVWRQQANLRSIMVRGENGLNQNFVKASMYFIWGQDKKGRAIVFLNLHNFIPPKNTKDMEELKALILYAMENARLFLDSEQNAAKGVLGLVDLTYFSRKNIDLDFARVFAETFQNYYPEILGQALIVGSGFRMALFEGVWSIGKYFLDPEVRSKVTFCKPAQVSGYVDSKYIPLSMHGQFDETKLYERAPPETAGIGKPENYEELDKEYVDAAKEFIRLTREWIYAAGKPQEAEIEEKRKAFKYECKKLWRKGVALRPPNIYQRLGLIDANGHVDWSKA</sequence>
<comment type="sequence caution" evidence="2">
    <conflict type="erroneous initiation">
        <sequence resource="EMBL-CDS" id="BAA13794"/>
    </conflict>
</comment>
<organism>
    <name type="scientific">Schizosaccharomyces pombe (strain 972 / ATCC 24843)</name>
    <name type="common">Fission yeast</name>
    <dbReference type="NCBI Taxonomy" id="284812"/>
    <lineage>
        <taxon>Eukaryota</taxon>
        <taxon>Fungi</taxon>
        <taxon>Dikarya</taxon>
        <taxon>Ascomycota</taxon>
        <taxon>Taphrinomycotina</taxon>
        <taxon>Schizosaccharomycetes</taxon>
        <taxon>Schizosaccharomycetales</taxon>
        <taxon>Schizosaccharomycetaceae</taxon>
        <taxon>Schizosaccharomyces</taxon>
    </lineage>
</organism>
<evidence type="ECO:0000255" key="1">
    <source>
        <dbReference type="PROSITE-ProRule" id="PRU00056"/>
    </source>
</evidence>
<evidence type="ECO:0000305" key="2"/>
<accession>Q9UUC2</accession>
<accession>P78783</accession>
<dbReference type="EMBL" id="D89132">
    <property type="protein sequence ID" value="BAA13794.1"/>
    <property type="status" value="ALT_INIT"/>
    <property type="molecule type" value="mRNA"/>
</dbReference>
<dbReference type="EMBL" id="CU329671">
    <property type="protein sequence ID" value="CAB44753.1"/>
    <property type="molecule type" value="Genomic_DNA"/>
</dbReference>
<dbReference type="PIR" id="T40308">
    <property type="entry name" value="T40308"/>
</dbReference>
<dbReference type="PIR" id="T42377">
    <property type="entry name" value="T42377"/>
</dbReference>
<dbReference type="SMR" id="Q9UUC2"/>
<dbReference type="BioGRID" id="277561">
    <property type="interactions" value="2"/>
</dbReference>
<dbReference type="FunCoup" id="Q9UUC2">
    <property type="interactions" value="8"/>
</dbReference>
<dbReference type="PaxDb" id="4896-SPBC365.01.1"/>
<dbReference type="EnsemblFungi" id="SPBC365.01.1">
    <property type="protein sequence ID" value="SPBC365.01.1:pep"/>
    <property type="gene ID" value="SPBC365.01"/>
</dbReference>
<dbReference type="KEGG" id="spo:2541046"/>
<dbReference type="PomBase" id="SPBC365.01"/>
<dbReference type="VEuPathDB" id="FungiDB:SPBC365.01"/>
<dbReference type="eggNOG" id="KOG1470">
    <property type="taxonomic scope" value="Eukaryota"/>
</dbReference>
<dbReference type="HOGENOM" id="CLU_781102_0_0_1"/>
<dbReference type="InParanoid" id="Q9UUC2"/>
<dbReference type="OMA" id="MYFIWGQ"/>
<dbReference type="PhylomeDB" id="Q9UUC2"/>
<dbReference type="PRO" id="PR:Q9UUC2"/>
<dbReference type="Proteomes" id="UP000002485">
    <property type="component" value="Chromosome II"/>
</dbReference>
<dbReference type="GO" id="GO:0032153">
    <property type="term" value="C:cell division site"/>
    <property type="evidence" value="ECO:0007005"/>
    <property type="project" value="PomBase"/>
</dbReference>
<dbReference type="GO" id="GO:0051286">
    <property type="term" value="C:cell tip"/>
    <property type="evidence" value="ECO:0007005"/>
    <property type="project" value="PomBase"/>
</dbReference>
<dbReference type="GO" id="GO:0005829">
    <property type="term" value="C:cytosol"/>
    <property type="evidence" value="ECO:0007005"/>
    <property type="project" value="PomBase"/>
</dbReference>
<dbReference type="GO" id="GO:0005634">
    <property type="term" value="C:nucleus"/>
    <property type="evidence" value="ECO:0007005"/>
    <property type="project" value="PomBase"/>
</dbReference>
<dbReference type="GO" id="GO:0008526">
    <property type="term" value="F:phosphatidylinositol transfer activity"/>
    <property type="evidence" value="ECO:0000318"/>
    <property type="project" value="GO_Central"/>
</dbReference>
<dbReference type="GO" id="GO:0120010">
    <property type="term" value="P:intermembrane phospholipid transfer"/>
    <property type="evidence" value="ECO:0000255"/>
    <property type="project" value="PomBase"/>
</dbReference>
<dbReference type="GO" id="GO:0015914">
    <property type="term" value="P:phospholipid transport"/>
    <property type="evidence" value="ECO:0000318"/>
    <property type="project" value="GO_Central"/>
</dbReference>
<dbReference type="CDD" id="cd00170">
    <property type="entry name" value="SEC14"/>
    <property type="match status" value="1"/>
</dbReference>
<dbReference type="Gene3D" id="3.40.525.10">
    <property type="entry name" value="CRAL-TRIO lipid binding domain"/>
    <property type="match status" value="1"/>
</dbReference>
<dbReference type="InterPro" id="IPR001251">
    <property type="entry name" value="CRAL-TRIO_dom"/>
</dbReference>
<dbReference type="InterPro" id="IPR036865">
    <property type="entry name" value="CRAL-TRIO_dom_sf"/>
</dbReference>
<dbReference type="InterPro" id="IPR011074">
    <property type="entry name" value="CRAL/TRIO_N_dom"/>
</dbReference>
<dbReference type="InterPro" id="IPR036273">
    <property type="entry name" value="CRAL/TRIO_N_dom_sf"/>
</dbReference>
<dbReference type="InterPro" id="IPR052432">
    <property type="entry name" value="PITP/CRAL-TRIO"/>
</dbReference>
<dbReference type="PANTHER" id="PTHR46590:SF6">
    <property type="entry name" value="CRAL-TRIO DOMAIN-CONTAINING PROTEIN C365.01"/>
    <property type="match status" value="1"/>
</dbReference>
<dbReference type="PANTHER" id="PTHR46590">
    <property type="entry name" value="PHOSPHATIDYLINOSITOL TRANSFER PROTEIN CSR1-RELATED"/>
    <property type="match status" value="1"/>
</dbReference>
<dbReference type="Pfam" id="PF00650">
    <property type="entry name" value="CRAL_TRIO"/>
    <property type="match status" value="1"/>
</dbReference>
<dbReference type="Pfam" id="PF03765">
    <property type="entry name" value="CRAL_TRIO_N"/>
    <property type="match status" value="1"/>
</dbReference>
<dbReference type="SMART" id="SM01100">
    <property type="entry name" value="CRAL_TRIO_N"/>
    <property type="match status" value="1"/>
</dbReference>
<dbReference type="SMART" id="SM00516">
    <property type="entry name" value="SEC14"/>
    <property type="match status" value="1"/>
</dbReference>
<dbReference type="SUPFAM" id="SSF52087">
    <property type="entry name" value="CRAL/TRIO domain"/>
    <property type="match status" value="1"/>
</dbReference>
<dbReference type="SUPFAM" id="SSF46938">
    <property type="entry name" value="CRAL/TRIO N-terminal domain"/>
    <property type="match status" value="1"/>
</dbReference>
<dbReference type="PROSITE" id="PS50191">
    <property type="entry name" value="CRAL_TRIO"/>
    <property type="match status" value="1"/>
</dbReference>
<reference key="1">
    <citation type="journal article" date="1997" name="DNA Res.">
        <title>Identification of open reading frames in Schizosaccharomyces pombe cDNAs.</title>
        <authorList>
            <person name="Yoshioka S."/>
            <person name="Kato K."/>
            <person name="Nakai K."/>
            <person name="Okayama H."/>
            <person name="Nojima H."/>
        </authorList>
    </citation>
    <scope>NUCLEOTIDE SEQUENCE [LARGE SCALE MRNA]</scope>
    <source>
        <strain>PR745</strain>
    </source>
</reference>
<reference key="2">
    <citation type="journal article" date="2002" name="Nature">
        <title>The genome sequence of Schizosaccharomyces pombe.</title>
        <authorList>
            <person name="Wood V."/>
            <person name="Gwilliam R."/>
            <person name="Rajandream M.A."/>
            <person name="Lyne M.H."/>
            <person name="Lyne R."/>
            <person name="Stewart A."/>
            <person name="Sgouros J.G."/>
            <person name="Peat N."/>
            <person name="Hayles J."/>
            <person name="Baker S.G."/>
            <person name="Basham D."/>
            <person name="Bowman S."/>
            <person name="Brooks K."/>
            <person name="Brown D."/>
            <person name="Brown S."/>
            <person name="Chillingworth T."/>
            <person name="Churcher C.M."/>
            <person name="Collins M."/>
            <person name="Connor R."/>
            <person name="Cronin A."/>
            <person name="Davis P."/>
            <person name="Feltwell T."/>
            <person name="Fraser A."/>
            <person name="Gentles S."/>
            <person name="Goble A."/>
            <person name="Hamlin N."/>
            <person name="Harris D.E."/>
            <person name="Hidalgo J."/>
            <person name="Hodgson G."/>
            <person name="Holroyd S."/>
            <person name="Hornsby T."/>
            <person name="Howarth S."/>
            <person name="Huckle E.J."/>
            <person name="Hunt S."/>
            <person name="Jagels K."/>
            <person name="James K.D."/>
            <person name="Jones L."/>
            <person name="Jones M."/>
            <person name="Leather S."/>
            <person name="McDonald S."/>
            <person name="McLean J."/>
            <person name="Mooney P."/>
            <person name="Moule S."/>
            <person name="Mungall K.L."/>
            <person name="Murphy L.D."/>
            <person name="Niblett D."/>
            <person name="Odell C."/>
            <person name="Oliver K."/>
            <person name="O'Neil S."/>
            <person name="Pearson D."/>
            <person name="Quail M.A."/>
            <person name="Rabbinowitsch E."/>
            <person name="Rutherford K.M."/>
            <person name="Rutter S."/>
            <person name="Saunders D."/>
            <person name="Seeger K."/>
            <person name="Sharp S."/>
            <person name="Skelton J."/>
            <person name="Simmonds M.N."/>
            <person name="Squares R."/>
            <person name="Squares S."/>
            <person name="Stevens K."/>
            <person name="Taylor K."/>
            <person name="Taylor R.G."/>
            <person name="Tivey A."/>
            <person name="Walsh S.V."/>
            <person name="Warren T."/>
            <person name="Whitehead S."/>
            <person name="Woodward J.R."/>
            <person name="Volckaert G."/>
            <person name="Aert R."/>
            <person name="Robben J."/>
            <person name="Grymonprez B."/>
            <person name="Weltjens I."/>
            <person name="Vanstreels E."/>
            <person name="Rieger M."/>
            <person name="Schaefer M."/>
            <person name="Mueller-Auer S."/>
            <person name="Gabel C."/>
            <person name="Fuchs M."/>
            <person name="Duesterhoeft A."/>
            <person name="Fritzc C."/>
            <person name="Holzer E."/>
            <person name="Moestl D."/>
            <person name="Hilbert H."/>
            <person name="Borzym K."/>
            <person name="Langer I."/>
            <person name="Beck A."/>
            <person name="Lehrach H."/>
            <person name="Reinhardt R."/>
            <person name="Pohl T.M."/>
            <person name="Eger P."/>
            <person name="Zimmermann W."/>
            <person name="Wedler H."/>
            <person name="Wambutt R."/>
            <person name="Purnelle B."/>
            <person name="Goffeau A."/>
            <person name="Cadieu E."/>
            <person name="Dreano S."/>
            <person name="Gloux S."/>
            <person name="Lelaure V."/>
            <person name="Mottier S."/>
            <person name="Galibert F."/>
            <person name="Aves S.J."/>
            <person name="Xiang Z."/>
            <person name="Hunt C."/>
            <person name="Moore K."/>
            <person name="Hurst S.M."/>
            <person name="Lucas M."/>
            <person name="Rochet M."/>
            <person name="Gaillardin C."/>
            <person name="Tallada V.A."/>
            <person name="Garzon A."/>
            <person name="Thode G."/>
            <person name="Daga R.R."/>
            <person name="Cruzado L."/>
            <person name="Jimenez J."/>
            <person name="Sanchez M."/>
            <person name="del Rey F."/>
            <person name="Benito J."/>
            <person name="Dominguez A."/>
            <person name="Revuelta J.L."/>
            <person name="Moreno S."/>
            <person name="Armstrong J."/>
            <person name="Forsburg S.L."/>
            <person name="Cerutti L."/>
            <person name="Lowe T."/>
            <person name="McCombie W.R."/>
            <person name="Paulsen I."/>
            <person name="Potashkin J."/>
            <person name="Shpakovski G.V."/>
            <person name="Ussery D."/>
            <person name="Barrell B.G."/>
            <person name="Nurse P."/>
        </authorList>
    </citation>
    <scope>NUCLEOTIDE SEQUENCE [LARGE SCALE GENOMIC DNA]</scope>
    <source>
        <strain>972 / ATCC 24843</strain>
    </source>
</reference>
<gene>
    <name type="ORF">SPBC365.01</name>
</gene>
<proteinExistence type="evidence at transcript level"/>
<keyword id="KW-1185">Reference proteome</keyword>
<protein>
    <recommendedName>
        <fullName>CRAL-TRIO domain-containing protein C365.01</fullName>
    </recommendedName>
</protein>
<feature type="chain" id="PRO_0000210749" description="CRAL-TRIO domain-containing protein C365.01">
    <location>
        <begin position="1"/>
        <end position="355"/>
    </location>
</feature>
<feature type="domain" description="CRAL-TRIO" evidence="1">
    <location>
        <begin position="93"/>
        <end position="260"/>
    </location>
</feature>